<keyword id="KW-0963">Cytoplasm</keyword>
<keyword id="KW-0342">GTP-binding</keyword>
<keyword id="KW-0378">Hydrolase</keyword>
<keyword id="KW-0460">Magnesium</keyword>
<keyword id="KW-0479">Metal-binding</keyword>
<keyword id="KW-0547">Nucleotide-binding</keyword>
<keyword id="KW-1185">Reference proteome</keyword>
<dbReference type="EC" id="3.6.5.-" evidence="1"/>
<dbReference type="EMBL" id="CP000812">
    <property type="protein sequence ID" value="ABV32962.1"/>
    <property type="molecule type" value="Genomic_DNA"/>
</dbReference>
<dbReference type="SMR" id="A8F478"/>
<dbReference type="STRING" id="416591.Tlet_0395"/>
<dbReference type="KEGG" id="tle:Tlet_0395"/>
<dbReference type="eggNOG" id="COG0536">
    <property type="taxonomic scope" value="Bacteria"/>
</dbReference>
<dbReference type="HOGENOM" id="CLU_011747_2_1_0"/>
<dbReference type="OrthoDB" id="9807318at2"/>
<dbReference type="Proteomes" id="UP000002016">
    <property type="component" value="Chromosome"/>
</dbReference>
<dbReference type="GO" id="GO:0005737">
    <property type="term" value="C:cytoplasm"/>
    <property type="evidence" value="ECO:0007669"/>
    <property type="project" value="UniProtKB-SubCell"/>
</dbReference>
<dbReference type="GO" id="GO:0005525">
    <property type="term" value="F:GTP binding"/>
    <property type="evidence" value="ECO:0007669"/>
    <property type="project" value="UniProtKB-UniRule"/>
</dbReference>
<dbReference type="GO" id="GO:0003924">
    <property type="term" value="F:GTPase activity"/>
    <property type="evidence" value="ECO:0007669"/>
    <property type="project" value="UniProtKB-UniRule"/>
</dbReference>
<dbReference type="GO" id="GO:0000287">
    <property type="term" value="F:magnesium ion binding"/>
    <property type="evidence" value="ECO:0007669"/>
    <property type="project" value="InterPro"/>
</dbReference>
<dbReference type="GO" id="GO:0042254">
    <property type="term" value="P:ribosome biogenesis"/>
    <property type="evidence" value="ECO:0007669"/>
    <property type="project" value="UniProtKB-UniRule"/>
</dbReference>
<dbReference type="CDD" id="cd01898">
    <property type="entry name" value="Obg"/>
    <property type="match status" value="1"/>
</dbReference>
<dbReference type="FunFam" id="2.70.210.12:FF:000001">
    <property type="entry name" value="GTPase Obg"/>
    <property type="match status" value="1"/>
</dbReference>
<dbReference type="Gene3D" id="3.30.300.350">
    <property type="entry name" value="GTP-binding protein OBG, C-terminal domain"/>
    <property type="match status" value="1"/>
</dbReference>
<dbReference type="Gene3D" id="2.70.210.12">
    <property type="entry name" value="GTP1/OBG domain"/>
    <property type="match status" value="1"/>
</dbReference>
<dbReference type="Gene3D" id="3.40.50.300">
    <property type="entry name" value="P-loop containing nucleotide triphosphate hydrolases"/>
    <property type="match status" value="1"/>
</dbReference>
<dbReference type="HAMAP" id="MF_01454">
    <property type="entry name" value="GTPase_Obg"/>
    <property type="match status" value="1"/>
</dbReference>
<dbReference type="InterPro" id="IPR031167">
    <property type="entry name" value="G_OBG"/>
</dbReference>
<dbReference type="InterPro" id="IPR006073">
    <property type="entry name" value="GTP-bd"/>
</dbReference>
<dbReference type="InterPro" id="IPR014100">
    <property type="entry name" value="GTP-bd_Obg/CgtA"/>
</dbReference>
<dbReference type="InterPro" id="IPR036346">
    <property type="entry name" value="GTP-bd_prot_GTP1/OBG_C_sf"/>
</dbReference>
<dbReference type="InterPro" id="IPR006169">
    <property type="entry name" value="GTP1_OBG_dom"/>
</dbReference>
<dbReference type="InterPro" id="IPR036726">
    <property type="entry name" value="GTP1_OBG_dom_sf"/>
</dbReference>
<dbReference type="InterPro" id="IPR045086">
    <property type="entry name" value="OBG_GTPase"/>
</dbReference>
<dbReference type="InterPro" id="IPR015349">
    <property type="entry name" value="OCT_dom"/>
</dbReference>
<dbReference type="InterPro" id="IPR027417">
    <property type="entry name" value="P-loop_NTPase"/>
</dbReference>
<dbReference type="InterPro" id="IPR005225">
    <property type="entry name" value="Small_GTP-bd"/>
</dbReference>
<dbReference type="NCBIfam" id="TIGR02729">
    <property type="entry name" value="Obg_CgtA"/>
    <property type="match status" value="1"/>
</dbReference>
<dbReference type="NCBIfam" id="TIGR03595">
    <property type="entry name" value="Obg_CgtA_exten"/>
    <property type="match status" value="1"/>
</dbReference>
<dbReference type="NCBIfam" id="NF008954">
    <property type="entry name" value="PRK12296.1"/>
    <property type="match status" value="1"/>
</dbReference>
<dbReference type="NCBIfam" id="NF008955">
    <property type="entry name" value="PRK12297.1"/>
    <property type="match status" value="1"/>
</dbReference>
<dbReference type="NCBIfam" id="NF008956">
    <property type="entry name" value="PRK12299.1"/>
    <property type="match status" value="1"/>
</dbReference>
<dbReference type="NCBIfam" id="TIGR00231">
    <property type="entry name" value="small_GTP"/>
    <property type="match status" value="1"/>
</dbReference>
<dbReference type="PANTHER" id="PTHR11702">
    <property type="entry name" value="DEVELOPMENTALLY REGULATED GTP-BINDING PROTEIN-RELATED"/>
    <property type="match status" value="1"/>
</dbReference>
<dbReference type="PANTHER" id="PTHR11702:SF31">
    <property type="entry name" value="MITOCHONDRIAL RIBOSOME-ASSOCIATED GTPASE 2"/>
    <property type="match status" value="1"/>
</dbReference>
<dbReference type="Pfam" id="PF09269">
    <property type="entry name" value="DUF1967"/>
    <property type="match status" value="1"/>
</dbReference>
<dbReference type="Pfam" id="PF01018">
    <property type="entry name" value="GTP1_OBG"/>
    <property type="match status" value="1"/>
</dbReference>
<dbReference type="Pfam" id="PF01926">
    <property type="entry name" value="MMR_HSR1"/>
    <property type="match status" value="1"/>
</dbReference>
<dbReference type="PIRSF" id="PIRSF002401">
    <property type="entry name" value="GTP_bd_Obg/CgtA"/>
    <property type="match status" value="1"/>
</dbReference>
<dbReference type="PRINTS" id="PR00326">
    <property type="entry name" value="GTP1OBG"/>
</dbReference>
<dbReference type="SUPFAM" id="SSF102741">
    <property type="entry name" value="Obg GTP-binding protein C-terminal domain"/>
    <property type="match status" value="1"/>
</dbReference>
<dbReference type="SUPFAM" id="SSF82051">
    <property type="entry name" value="Obg GTP-binding protein N-terminal domain"/>
    <property type="match status" value="1"/>
</dbReference>
<dbReference type="SUPFAM" id="SSF52540">
    <property type="entry name" value="P-loop containing nucleoside triphosphate hydrolases"/>
    <property type="match status" value="1"/>
</dbReference>
<dbReference type="PROSITE" id="PS51710">
    <property type="entry name" value="G_OBG"/>
    <property type="match status" value="1"/>
</dbReference>
<dbReference type="PROSITE" id="PS51883">
    <property type="entry name" value="OBG"/>
    <property type="match status" value="1"/>
</dbReference>
<dbReference type="PROSITE" id="PS51881">
    <property type="entry name" value="OCT"/>
    <property type="match status" value="1"/>
</dbReference>
<reference key="1">
    <citation type="submission" date="2007-08" db="EMBL/GenBank/DDBJ databases">
        <title>Complete sequence of Thermotoga lettingae TMO.</title>
        <authorList>
            <consortium name="US DOE Joint Genome Institute"/>
            <person name="Copeland A."/>
            <person name="Lucas S."/>
            <person name="Lapidus A."/>
            <person name="Barry K."/>
            <person name="Glavina del Rio T."/>
            <person name="Dalin E."/>
            <person name="Tice H."/>
            <person name="Pitluck S."/>
            <person name="Foster B."/>
            <person name="Bruce D."/>
            <person name="Schmutz J."/>
            <person name="Larimer F."/>
            <person name="Land M."/>
            <person name="Hauser L."/>
            <person name="Kyrpides N."/>
            <person name="Mikhailova N."/>
            <person name="Nelson K."/>
            <person name="Gogarten J.P."/>
            <person name="Noll K."/>
            <person name="Richardson P."/>
        </authorList>
    </citation>
    <scope>NUCLEOTIDE SEQUENCE [LARGE SCALE GENOMIC DNA]</scope>
    <source>
        <strain>ATCC BAA-301 / DSM 14385 / NBRC 107922 / TMO</strain>
    </source>
</reference>
<gene>
    <name evidence="1" type="primary">obg</name>
    <name type="ordered locus">Tlet_0395</name>
</gene>
<proteinExistence type="inferred from homology"/>
<feature type="chain" id="PRO_0000386355" description="GTPase Obg">
    <location>
        <begin position="1"/>
        <end position="433"/>
    </location>
</feature>
<feature type="domain" description="Obg" evidence="3">
    <location>
        <begin position="4"/>
        <end position="162"/>
    </location>
</feature>
<feature type="domain" description="OBG-type G" evidence="1">
    <location>
        <begin position="163"/>
        <end position="334"/>
    </location>
</feature>
<feature type="domain" description="OCT" evidence="2">
    <location>
        <begin position="356"/>
        <end position="433"/>
    </location>
</feature>
<feature type="binding site" evidence="1">
    <location>
        <begin position="169"/>
        <end position="176"/>
    </location>
    <ligand>
        <name>GTP</name>
        <dbReference type="ChEBI" id="CHEBI:37565"/>
    </ligand>
</feature>
<feature type="binding site" evidence="1">
    <location>
        <position position="176"/>
    </location>
    <ligand>
        <name>Mg(2+)</name>
        <dbReference type="ChEBI" id="CHEBI:18420"/>
    </ligand>
</feature>
<feature type="binding site" evidence="1">
    <location>
        <begin position="194"/>
        <end position="198"/>
    </location>
    <ligand>
        <name>GTP</name>
        <dbReference type="ChEBI" id="CHEBI:37565"/>
    </ligand>
</feature>
<feature type="binding site" evidence="1">
    <location>
        <position position="196"/>
    </location>
    <ligand>
        <name>Mg(2+)</name>
        <dbReference type="ChEBI" id="CHEBI:18420"/>
    </ligand>
</feature>
<feature type="binding site" evidence="1">
    <location>
        <begin position="216"/>
        <end position="219"/>
    </location>
    <ligand>
        <name>GTP</name>
        <dbReference type="ChEBI" id="CHEBI:37565"/>
    </ligand>
</feature>
<feature type="binding site" evidence="1">
    <location>
        <begin position="286"/>
        <end position="289"/>
    </location>
    <ligand>
        <name>GTP</name>
        <dbReference type="ChEBI" id="CHEBI:37565"/>
    </ligand>
</feature>
<feature type="binding site" evidence="1">
    <location>
        <begin position="315"/>
        <end position="317"/>
    </location>
    <ligand>
        <name>GTP</name>
        <dbReference type="ChEBI" id="CHEBI:37565"/>
    </ligand>
</feature>
<sequence length="433" mass="48390">MQKEDFVDRVTIFVKAGDGGNGAVSFRREKYVPKGGPDGGDGGDGGFVILRANPGLSTLLNFKYQRRFIAQNGQHGKGKKQSGKSGEDLVIDVPVGTIVKDANTGEVLADLDRSWMMVCVARGGKGGRGNIHFATSVFRAPRIAEKGDKGEERWLELELKLLADAGLIGFPNVGKSSLISAMSNARPKIADYPFTTLVPNLGVVKIDENSEFVLADIPGLIERASEGAGLGNLFLRHIERCSVLVHVIDISGSEGRDFIKDYDVIVQELCKYNEQLSRKPQIIVANKIDLLEKDELEKRLETLEKHANQKIYPVSALLRINIDILKQKIFEIVGKSRLLLQKQPVPVFEKPKPIRTKIEERFDFEIKKTQDGFEICGEQIDKWLSRYSLEQKDALERFLDTLERNGLSEKLKQMGAHDGDTVWIGQYSFEYKE</sequence>
<protein>
    <recommendedName>
        <fullName evidence="1">GTPase Obg</fullName>
        <ecNumber evidence="1">3.6.5.-</ecNumber>
    </recommendedName>
    <alternativeName>
        <fullName evidence="1">GTP-binding protein Obg</fullName>
    </alternativeName>
</protein>
<evidence type="ECO:0000255" key="1">
    <source>
        <dbReference type="HAMAP-Rule" id="MF_01454"/>
    </source>
</evidence>
<evidence type="ECO:0000255" key="2">
    <source>
        <dbReference type="PROSITE-ProRule" id="PRU01229"/>
    </source>
</evidence>
<evidence type="ECO:0000255" key="3">
    <source>
        <dbReference type="PROSITE-ProRule" id="PRU01231"/>
    </source>
</evidence>
<name>OBG_PSELT</name>
<accession>A8F478</accession>
<organism>
    <name type="scientific">Pseudothermotoga lettingae (strain ATCC BAA-301 / DSM 14385 / NBRC 107922 / TMO)</name>
    <name type="common">Thermotoga lettingae</name>
    <dbReference type="NCBI Taxonomy" id="416591"/>
    <lineage>
        <taxon>Bacteria</taxon>
        <taxon>Thermotogati</taxon>
        <taxon>Thermotogota</taxon>
        <taxon>Thermotogae</taxon>
        <taxon>Thermotogales</taxon>
        <taxon>Thermotogaceae</taxon>
        <taxon>Pseudothermotoga</taxon>
    </lineage>
</organism>
<comment type="function">
    <text evidence="1">An essential GTPase which binds GTP, GDP and possibly (p)ppGpp with moderate affinity, with high nucleotide exchange rates and a fairly low GTP hydrolysis rate. Plays a role in control of the cell cycle, stress response, ribosome biogenesis and in those bacteria that undergo differentiation, in morphogenesis control.</text>
</comment>
<comment type="cofactor">
    <cofactor evidence="1">
        <name>Mg(2+)</name>
        <dbReference type="ChEBI" id="CHEBI:18420"/>
    </cofactor>
</comment>
<comment type="subunit">
    <text evidence="1">Monomer.</text>
</comment>
<comment type="subcellular location">
    <subcellularLocation>
        <location evidence="1">Cytoplasm</location>
    </subcellularLocation>
</comment>
<comment type="similarity">
    <text evidence="1">Belongs to the TRAFAC class OBG-HflX-like GTPase superfamily. OBG GTPase family.</text>
</comment>